<dbReference type="EC" id="1.21.99.5" evidence="4"/>
<dbReference type="EMBL" id="AY216592">
    <property type="protein sequence ID" value="AAO60101.1"/>
    <property type="molecule type" value="Genomic_DNA"/>
</dbReference>
<dbReference type="SMR" id="Q848J2"/>
<dbReference type="GO" id="GO:0005886">
    <property type="term" value="C:plasma membrane"/>
    <property type="evidence" value="ECO:0007669"/>
    <property type="project" value="UniProtKB-SubCell"/>
</dbReference>
<dbReference type="GO" id="GO:0051539">
    <property type="term" value="F:4 iron, 4 sulfur cluster binding"/>
    <property type="evidence" value="ECO:0007669"/>
    <property type="project" value="UniProtKB-KW"/>
</dbReference>
<dbReference type="GO" id="GO:0046872">
    <property type="term" value="F:metal ion binding"/>
    <property type="evidence" value="ECO:0007669"/>
    <property type="project" value="UniProtKB-KW"/>
</dbReference>
<dbReference type="GO" id="GO:0016491">
    <property type="term" value="F:oxidoreductase activity"/>
    <property type="evidence" value="ECO:0007669"/>
    <property type="project" value="UniProtKB-KW"/>
</dbReference>
<dbReference type="Gene3D" id="3.30.70.20">
    <property type="match status" value="1"/>
</dbReference>
<dbReference type="InterPro" id="IPR017896">
    <property type="entry name" value="4Fe4S_Fe-S-bd"/>
</dbReference>
<dbReference type="InterPro" id="IPR017900">
    <property type="entry name" value="4Fe4S_Fe_S_CS"/>
</dbReference>
<dbReference type="InterPro" id="IPR012832">
    <property type="entry name" value="RDH"/>
</dbReference>
<dbReference type="InterPro" id="IPR006311">
    <property type="entry name" value="TAT_signal"/>
</dbReference>
<dbReference type="InterPro" id="IPR019546">
    <property type="entry name" value="TAT_signal_bac_arc"/>
</dbReference>
<dbReference type="NCBIfam" id="TIGR02486">
    <property type="entry name" value="RDH"/>
    <property type="match status" value="1"/>
</dbReference>
<dbReference type="NCBIfam" id="TIGR01409">
    <property type="entry name" value="TAT_signal_seq"/>
    <property type="match status" value="1"/>
</dbReference>
<dbReference type="PANTHER" id="PTHR42827:SF1">
    <property type="entry name" value="IRON-SULFUR CLUSTER-BINDING PROTEIN"/>
    <property type="match status" value="1"/>
</dbReference>
<dbReference type="PANTHER" id="PTHR42827">
    <property type="entry name" value="IRON-SULFUR CLUSTER-BINDING PROTEIN-RELATED"/>
    <property type="match status" value="1"/>
</dbReference>
<dbReference type="Pfam" id="PF13484">
    <property type="entry name" value="Fer4_16"/>
    <property type="match status" value="1"/>
</dbReference>
<dbReference type="Pfam" id="PF10518">
    <property type="entry name" value="TAT_signal"/>
    <property type="match status" value="1"/>
</dbReference>
<dbReference type="SUPFAM" id="SSF54862">
    <property type="entry name" value="4Fe-4S ferredoxins"/>
    <property type="match status" value="1"/>
</dbReference>
<dbReference type="PROSITE" id="PS00198">
    <property type="entry name" value="4FE4S_FER_1"/>
    <property type="match status" value="1"/>
</dbReference>
<dbReference type="PROSITE" id="PS51379">
    <property type="entry name" value="4FE4S_FER_2"/>
    <property type="match status" value="1"/>
</dbReference>
<dbReference type="PROSITE" id="PS51318">
    <property type="entry name" value="TAT"/>
    <property type="match status" value="1"/>
</dbReference>
<reference key="1">
    <citation type="submission" date="2003-01" db="EMBL/GenBank/DDBJ databases">
        <title>Tetrachloroethene reductive dehalogenase operon from Desulfitobacterium strain PCE-S.</title>
        <authorList>
            <person name="Neumann A."/>
            <person name="Reinhardt S."/>
            <person name="Diekert G."/>
        </authorList>
    </citation>
    <scope>NUCLEOTIDE SEQUENCE [GENOMIC DNA]</scope>
    <source>
        <strain>PCE-S</strain>
    </source>
</reference>
<reference key="2">
    <citation type="journal article" date="1998" name="Arch. Microbiol.">
        <title>Purification and characterization of the tetrachloroethene reductive dehalogenase of strain PCE-S.</title>
        <authorList>
            <person name="Miller E."/>
            <person name="Wohlfarth G."/>
            <person name="Diekert G."/>
        </authorList>
    </citation>
    <scope>PROTEIN SEQUENCE OF 40-60</scope>
    <scope>FUNCTION</scope>
    <scope>CATALYTIC ACTIVITY</scope>
    <scope>COFACTOR</scope>
    <scope>BIOPHYSICOCHEMICAL PROPERTIES</scope>
    <scope>SUBCELLULAR LOCATION</scope>
    <source>
        <strain>PCE-S</strain>
    </source>
</reference>
<protein>
    <recommendedName>
        <fullName evidence="5">Tetrachloroethene reductive dehalogenase</fullName>
        <ecNumber evidence="4">1.21.99.5</ecNumber>
    </recommendedName>
</protein>
<proteinExistence type="evidence at protein level"/>
<evidence type="ECO:0000250" key="1">
    <source>
        <dbReference type="UniProtKB" id="O68252"/>
    </source>
</evidence>
<evidence type="ECO:0000255" key="2">
    <source>
        <dbReference type="PROSITE-ProRule" id="PRU00648"/>
    </source>
</evidence>
<evidence type="ECO:0000255" key="3">
    <source>
        <dbReference type="PROSITE-ProRule" id="PRU00711"/>
    </source>
</evidence>
<evidence type="ECO:0000269" key="4">
    <source>
    </source>
</evidence>
<evidence type="ECO:0000303" key="5">
    <source>
    </source>
</evidence>
<evidence type="ECO:0000303" key="6">
    <source ref="1"/>
</evidence>
<evidence type="ECO:0000305" key="7"/>
<evidence type="ECO:0000305" key="8">
    <source>
    </source>
</evidence>
<comment type="function">
    <text evidence="4">Catalyzes the reductive dechlorination of tetrachloroethene (PCE) to trichloroethene (TCE) and of trichloroethene to cis-1,2-dichloroethene (DCE) (PubMed:9575235). Reduced methyl viologen can act as the artificial electron donor (PubMed:9575235).</text>
</comment>
<comment type="catalytic activity">
    <reaction evidence="4">
        <text>trichloroethene + chloride + A + H(+) = tetrachloroethene + AH2</text>
        <dbReference type="Rhea" id="RHEA:20353"/>
        <dbReference type="ChEBI" id="CHEBI:13193"/>
        <dbReference type="ChEBI" id="CHEBI:15378"/>
        <dbReference type="ChEBI" id="CHEBI:16602"/>
        <dbReference type="ChEBI" id="CHEBI:17300"/>
        <dbReference type="ChEBI" id="CHEBI:17499"/>
        <dbReference type="ChEBI" id="CHEBI:17996"/>
        <dbReference type="EC" id="1.21.99.5"/>
    </reaction>
    <physiologicalReaction direction="right-to-left" evidence="4">
        <dbReference type="Rhea" id="RHEA:20355"/>
    </physiologicalReaction>
</comment>
<comment type="catalytic activity">
    <reaction evidence="4">
        <text>trichloroethene + AH2 = (Z)-1,2-dichloroethene + chloride + A + H(+)</text>
        <dbReference type="Rhea" id="RHEA:67992"/>
        <dbReference type="ChEBI" id="CHEBI:13193"/>
        <dbReference type="ChEBI" id="CHEBI:15378"/>
        <dbReference type="ChEBI" id="CHEBI:16602"/>
        <dbReference type="ChEBI" id="CHEBI:17499"/>
        <dbReference type="ChEBI" id="CHEBI:17996"/>
        <dbReference type="ChEBI" id="CHEBI:28805"/>
    </reaction>
    <physiologicalReaction direction="left-to-right" evidence="4">
        <dbReference type="Rhea" id="RHEA:67993"/>
    </physiologicalReaction>
</comment>
<comment type="cofactor">
    <cofactor evidence="4">
        <name>[4Fe-4S] cluster</name>
        <dbReference type="ChEBI" id="CHEBI:49883"/>
    </cofactor>
    <text evidence="4">Binds 2 [4Fe-4S] clusters.</text>
</comment>
<comment type="cofactor">
    <cofactor evidence="4">
        <name>corrinoid</name>
        <dbReference type="ChEBI" id="CHEBI:33913"/>
    </cofactor>
</comment>
<comment type="biophysicochemical properties">
    <kinetics>
        <KM evidence="4">10 uM for tetrachloroethene (with reduced methyl viologen as electron donor)</KM>
        <KM evidence="4">4 uM for trichloroethene (with reduced methyl viologen as electron donor)</KM>
        <KM evidence="4">0.3 mM for methyl viologen</KM>
    </kinetics>
    <phDependence>
        <text evidence="4">Optimum pH is about 7.2.</text>
    </phDependence>
    <temperatureDependence>
        <text evidence="4">Optimum temperature is 50 degrees Celsius.</text>
    </temperatureDependence>
</comment>
<comment type="subcellular location">
    <subcellularLocation>
        <location evidence="4">Cell membrane</location>
        <topology evidence="4">Peripheral membrane protein</topology>
    </subcellularLocation>
</comment>
<comment type="PTM">
    <text evidence="2 4">Predicted to be exported by the Tat system. The position of the signal peptide cleavage has been experimentally proven.</text>
</comment>
<comment type="similarity">
    <text evidence="7">Belongs to the PceA family.</text>
</comment>
<keyword id="KW-0004">4Fe-4S</keyword>
<keyword id="KW-1003">Cell membrane</keyword>
<keyword id="KW-0903">Direct protein sequencing</keyword>
<keyword id="KW-0408">Iron</keyword>
<keyword id="KW-0411">Iron-sulfur</keyword>
<keyword id="KW-0472">Membrane</keyword>
<keyword id="KW-0479">Metal-binding</keyword>
<keyword id="KW-0560">Oxidoreductase</keyword>
<keyword id="KW-0677">Repeat</keyword>
<keyword id="KW-0732">Signal</keyword>
<sequence length="551" mass="61241">MGEINRRNFLKASMLGAAAAAVASASVVKGVVSPLVADAADIVAPITETSEFPYKVDAKYQRYNSLKNFFEKTFDPEENKTPIKFHYDDVSKITGKKDTGKDLPMLNAERLGIKGRPATHTETSILFHTQHLGAMLTQRHNETGWTGLDEALNAGAWAVEFDYSGFNAAGGGPGSAIPLYPINPMTNEIANEPVMVPGLYNWDNIDVESVRQQGQQWKFESKEEASKILKKATRLLGADLVGIAPYDERWTYSTWGRKIQKPCKMPNGRTKYLPWDLPKMLSGGGVEVFGHAKFEPDWEKYAGFKPKSVIVFVLEEDYEAIRTSPSVISSATVGKSYSNMAEVAYKIAVFLRKLGYYAAPCGNDTGISVPMAVQAGLGEAGRNGLLITQKFGPRHRIAKVYTDLELAPDKPRKFGVREFCRLCKKCADACPAQAISHEKDPKVLQPEDCEASENPYTEKWHVDSERCGSFWAYNGSPCSNCVAVCSWNKVETWNHDVARVATQIPLLQDAARKFDEWFGYSGPVNPDERLESGYVQNMVKDFWNNPESIKQ</sequence>
<name>PCEA_DESHA</name>
<organism>
    <name type="scientific">Desulfitobacterium hafniense</name>
    <name type="common">Desulfitobacterium frappieri</name>
    <dbReference type="NCBI Taxonomy" id="49338"/>
    <lineage>
        <taxon>Bacteria</taxon>
        <taxon>Bacillati</taxon>
        <taxon>Bacillota</taxon>
        <taxon>Clostridia</taxon>
        <taxon>Eubacteriales</taxon>
        <taxon>Desulfitobacteriaceae</taxon>
        <taxon>Desulfitobacterium</taxon>
    </lineage>
</organism>
<accession>Q848J2</accession>
<gene>
    <name evidence="6" type="primary">pceA</name>
</gene>
<feature type="signal peptide" description="Tat-type signal" evidence="2 4">
    <location>
        <begin position="1"/>
        <end position="39"/>
    </location>
</feature>
<feature type="chain" id="PRO_5004299602" description="Tetrachloroethene reductive dehalogenase" evidence="4">
    <location>
        <begin position="40"/>
        <end position="551"/>
    </location>
</feature>
<feature type="domain" description="4Fe-4S ferredoxin-type 1" evidence="3">
    <location>
        <begin position="411"/>
        <end position="440"/>
    </location>
</feature>
<feature type="domain" description="4Fe-4S ferredoxin-type 2" evidence="7">
    <location>
        <begin position="478"/>
        <end position="496"/>
    </location>
</feature>
<feature type="binding site" evidence="1">
    <location>
        <position position="420"/>
    </location>
    <ligand>
        <name>[4Fe-4S] cluster</name>
        <dbReference type="ChEBI" id="CHEBI:49883"/>
        <label>1</label>
    </ligand>
</feature>
<feature type="binding site" evidence="1">
    <location>
        <position position="423"/>
    </location>
    <ligand>
        <name>[4Fe-4S] cluster</name>
        <dbReference type="ChEBI" id="CHEBI:49883"/>
        <label>1</label>
    </ligand>
</feature>
<feature type="binding site" evidence="1">
    <location>
        <position position="426"/>
    </location>
    <ligand>
        <name>[4Fe-4S] cluster</name>
        <dbReference type="ChEBI" id="CHEBI:49883"/>
        <label>1</label>
    </ligand>
</feature>
<feature type="binding site" evidence="1">
    <location>
        <position position="430"/>
    </location>
    <ligand>
        <name>[4Fe-4S] cluster</name>
        <dbReference type="ChEBI" id="CHEBI:49883"/>
        <label>2</label>
    </ligand>
</feature>
<feature type="binding site" evidence="1">
    <location>
        <position position="467"/>
    </location>
    <ligand>
        <name>[4Fe-4S] cluster</name>
        <dbReference type="ChEBI" id="CHEBI:49883"/>
        <label>2</label>
    </ligand>
</feature>
<feature type="binding site" evidence="1">
    <location>
        <position position="478"/>
    </location>
    <ligand>
        <name>[4Fe-4S] cluster</name>
        <dbReference type="ChEBI" id="CHEBI:49883"/>
        <label>2</label>
    </ligand>
</feature>
<feature type="binding site" evidence="1">
    <location>
        <position position="481"/>
    </location>
    <ligand>
        <name>[4Fe-4S] cluster</name>
        <dbReference type="ChEBI" id="CHEBI:49883"/>
        <label>2</label>
    </ligand>
</feature>
<feature type="binding site" evidence="1">
    <location>
        <position position="485"/>
    </location>
    <ligand>
        <name>[4Fe-4S] cluster</name>
        <dbReference type="ChEBI" id="CHEBI:49883"/>
        <label>1</label>
    </ligand>
</feature>
<feature type="sequence conflict" description="In Ref. 2; AA sequence." evidence="8" ref="2">
    <location>
        <position position="59"/>
    </location>
</feature>